<sequence>MTISCLLRIRPALAKSFFENGQRAFASHAAFAEHAKLERIRNIGISAHIDSGKTTLTERILFYTGRIKEMHEVKGKDNVGATMDSMELERQRGITIQSAATYTVWKDHNINIIDTPGHVDFTVEVERALRVLDGAVLVLCSVGGVQSQTLTVNRQMKRYNVPCLAFINKLDRMGANPYRVLGQMKSKLNHNAAFIQLPIGVESNCKGIVDLVKQKALYFDDQLGLTVREDEIPQDMRTECDERRHELIEQLSNVDDAIGELFLEEKTPTPQDLMGAIRRSTLKRTFTPVLVGTALKNKGVQPLLDAVLDYLPNPGEVENLAMIEKKGEEPQKVFLNPARDGKDPFVGLAFKLEAGRFGQLTYLRCYQGVLKKGDSIFNVRSGKKVRLARLVRLHSNNMEDVNEVYAGDIFALFGVDCASGDTFVTDPKLELSMESIFVPDPVVSMAIKPTNTKDRDNFSKAVARFTKEDPTFRFAYDPDVKETLVSGMGELHLEIYAQRMEREYNCPVTLGKPKVAFRETLVAPCEFDYLHKKQSGGQGQYGRVTGILEPLPPHQNTVIEFTDETIGTNVPKQFVPAIEKGFRQMAEKGLLSGHKLSGLKFRLLDGAHHIVDSSELAFMLAAQGAIKSVFENGSWQILEPVMMVEVTAPEEFQGTVIGQLNKRHGIITGTEGTEGWFTIYAEVPLNDMFGYAGELRSSTQGKGEFSMEYSRYSPCMPDVQEQLMREYQASQGIAVPDKKQKKKN</sequence>
<feature type="transit peptide" description="Mitochondrion" evidence="1">
    <location>
        <begin position="1"/>
        <end position="25"/>
    </location>
</feature>
<feature type="chain" id="PRO_0000385544" description="Elongation factor G, mitochondrial">
    <location>
        <begin position="26"/>
        <end position="744"/>
    </location>
</feature>
<feature type="domain" description="tr-type G">
    <location>
        <begin position="38"/>
        <end position="315"/>
    </location>
</feature>
<feature type="binding site" evidence="1">
    <location>
        <begin position="47"/>
        <end position="54"/>
    </location>
    <ligand>
        <name>GTP</name>
        <dbReference type="ChEBI" id="CHEBI:37565"/>
    </ligand>
</feature>
<feature type="binding site" evidence="1">
    <location>
        <begin position="114"/>
        <end position="118"/>
    </location>
    <ligand>
        <name>GTP</name>
        <dbReference type="ChEBI" id="CHEBI:37565"/>
    </ligand>
</feature>
<feature type="binding site" evidence="1">
    <location>
        <begin position="168"/>
        <end position="171"/>
    </location>
    <ligand>
        <name>GTP</name>
        <dbReference type="ChEBI" id="CHEBI:37565"/>
    </ligand>
</feature>
<organism>
    <name type="scientific">Culex quinquefasciatus</name>
    <name type="common">Southern house mosquito</name>
    <name type="synonym">Culex pungens</name>
    <dbReference type="NCBI Taxonomy" id="7176"/>
    <lineage>
        <taxon>Eukaryota</taxon>
        <taxon>Metazoa</taxon>
        <taxon>Ecdysozoa</taxon>
        <taxon>Arthropoda</taxon>
        <taxon>Hexapoda</taxon>
        <taxon>Insecta</taxon>
        <taxon>Pterygota</taxon>
        <taxon>Neoptera</taxon>
        <taxon>Endopterygota</taxon>
        <taxon>Diptera</taxon>
        <taxon>Nematocera</taxon>
        <taxon>Culicoidea</taxon>
        <taxon>Culicidae</taxon>
        <taxon>Culicinae</taxon>
        <taxon>Culicini</taxon>
        <taxon>Culex</taxon>
        <taxon>Culex</taxon>
    </lineage>
</organism>
<protein>
    <recommendedName>
        <fullName evidence="1">Elongation factor G, mitochondrial</fullName>
        <shortName evidence="1">EF-Gmt</shortName>
    </recommendedName>
    <alternativeName>
        <fullName evidence="1">Elongation factor G 1, mitochondrial</fullName>
        <shortName evidence="1">mEF-G 1</shortName>
    </alternativeName>
    <alternativeName>
        <fullName evidence="1">Elongation factor G1</fullName>
    </alternativeName>
</protein>
<proteinExistence type="inferred from homology"/>
<name>EFGM_CULQU</name>
<comment type="function">
    <text evidence="1">Mitochondrial GTPase that catalyzes the GTP-dependent ribosomal translocation step during translation elongation. During this step, the ribosome changes from the pre-translocational (PRE) to the post-translocational (POST) state as the newly formed A-site-bound peptidyl-tRNA and P-site-bound deacylated tRNA move to the P and E sites, respectively. Catalyzes the coordinated movement of the two tRNA molecules, the mRNA and conformational changes in the ribosome.</text>
</comment>
<comment type="pathway">
    <text evidence="1">Protein biosynthesis; polypeptide chain elongation.</text>
</comment>
<comment type="subcellular location">
    <subcellularLocation>
        <location evidence="1">Mitochondrion</location>
    </subcellularLocation>
</comment>
<comment type="similarity">
    <text evidence="2">Belongs to the TRAFAC class translation factor GTPase superfamily. Classic translation factor GTPase family. EF-G/EF-2 subfamily.</text>
</comment>
<dbReference type="EMBL" id="DS231927">
    <property type="protein sequence ID" value="EDS27050.1"/>
    <property type="molecule type" value="Genomic_DNA"/>
</dbReference>
<dbReference type="SMR" id="B0WGM1"/>
<dbReference type="FunCoup" id="B0WGM1">
    <property type="interactions" value="2124"/>
</dbReference>
<dbReference type="STRING" id="7176.B0WGM1"/>
<dbReference type="EnsemblMetazoa" id="CPIJ005834-RA">
    <property type="protein sequence ID" value="CPIJ005834-PA"/>
    <property type="gene ID" value="CPIJ005834"/>
</dbReference>
<dbReference type="EnsemblMetazoa" id="CQUJHB003137.R4831">
    <property type="protein sequence ID" value="CQUJHB003137.P4831"/>
    <property type="gene ID" value="CQUJHB003137"/>
</dbReference>
<dbReference type="EnsemblMetazoa" id="XM_001847803.2">
    <property type="protein sequence ID" value="XP_001847855.1"/>
    <property type="gene ID" value="LOC6038008"/>
</dbReference>
<dbReference type="KEGG" id="cqu:CpipJ_CPIJ005834"/>
<dbReference type="CTD" id="34004"/>
<dbReference type="VEuPathDB" id="VectorBase:CPIJ005834"/>
<dbReference type="VEuPathDB" id="VectorBase:CQUJHB003137"/>
<dbReference type="eggNOG" id="KOG0465">
    <property type="taxonomic scope" value="Eukaryota"/>
</dbReference>
<dbReference type="HOGENOM" id="CLU_002794_4_0_1"/>
<dbReference type="InParanoid" id="B0WGM1"/>
<dbReference type="OMA" id="GQFAKVQ"/>
<dbReference type="OrthoDB" id="198619at2759"/>
<dbReference type="PhylomeDB" id="B0WGM1"/>
<dbReference type="UniPathway" id="UPA00345"/>
<dbReference type="Proteomes" id="UP000002320">
    <property type="component" value="Unassembled WGS sequence"/>
</dbReference>
<dbReference type="GO" id="GO:0005739">
    <property type="term" value="C:mitochondrion"/>
    <property type="evidence" value="ECO:0007669"/>
    <property type="project" value="UniProtKB-SubCell"/>
</dbReference>
<dbReference type="GO" id="GO:0005525">
    <property type="term" value="F:GTP binding"/>
    <property type="evidence" value="ECO:0007669"/>
    <property type="project" value="UniProtKB-UniRule"/>
</dbReference>
<dbReference type="GO" id="GO:0003924">
    <property type="term" value="F:GTPase activity"/>
    <property type="evidence" value="ECO:0000250"/>
    <property type="project" value="UniProtKB"/>
</dbReference>
<dbReference type="GO" id="GO:0003746">
    <property type="term" value="F:translation elongation factor activity"/>
    <property type="evidence" value="ECO:0000250"/>
    <property type="project" value="UniProtKB"/>
</dbReference>
<dbReference type="GO" id="GO:0070125">
    <property type="term" value="P:mitochondrial translational elongation"/>
    <property type="evidence" value="ECO:0000250"/>
    <property type="project" value="UniProtKB"/>
</dbReference>
<dbReference type="CDD" id="cd01886">
    <property type="entry name" value="EF-G"/>
    <property type="match status" value="1"/>
</dbReference>
<dbReference type="CDD" id="cd16262">
    <property type="entry name" value="EFG_III"/>
    <property type="match status" value="1"/>
</dbReference>
<dbReference type="CDD" id="cd01434">
    <property type="entry name" value="EFG_mtEFG1_IV"/>
    <property type="match status" value="1"/>
</dbReference>
<dbReference type="CDD" id="cd04097">
    <property type="entry name" value="mtEFG1_C"/>
    <property type="match status" value="1"/>
</dbReference>
<dbReference type="CDD" id="cd04091">
    <property type="entry name" value="mtEFG1_II_like"/>
    <property type="match status" value="1"/>
</dbReference>
<dbReference type="FunFam" id="3.30.230.10:FF:000003">
    <property type="entry name" value="Elongation factor G"/>
    <property type="match status" value="1"/>
</dbReference>
<dbReference type="FunFam" id="3.30.70.240:FF:000001">
    <property type="entry name" value="Elongation factor G"/>
    <property type="match status" value="1"/>
</dbReference>
<dbReference type="FunFam" id="3.30.70.870:FF:000001">
    <property type="entry name" value="Elongation factor G"/>
    <property type="match status" value="1"/>
</dbReference>
<dbReference type="FunFam" id="2.40.30.10:FF:000022">
    <property type="entry name" value="Elongation factor G, mitochondrial"/>
    <property type="match status" value="1"/>
</dbReference>
<dbReference type="FunFam" id="3.40.50.300:FF:000539">
    <property type="entry name" value="Elongation factor G, mitochondrial"/>
    <property type="match status" value="1"/>
</dbReference>
<dbReference type="Gene3D" id="3.30.230.10">
    <property type="match status" value="1"/>
</dbReference>
<dbReference type="Gene3D" id="3.30.70.240">
    <property type="match status" value="1"/>
</dbReference>
<dbReference type="Gene3D" id="3.30.70.870">
    <property type="entry name" value="Elongation Factor G (Translational Gtpase), domain 3"/>
    <property type="match status" value="1"/>
</dbReference>
<dbReference type="Gene3D" id="3.40.50.300">
    <property type="entry name" value="P-loop containing nucleotide triphosphate hydrolases"/>
    <property type="match status" value="1"/>
</dbReference>
<dbReference type="Gene3D" id="2.40.30.10">
    <property type="entry name" value="Translation factors"/>
    <property type="match status" value="1"/>
</dbReference>
<dbReference type="HAMAP" id="MF_00054_B">
    <property type="entry name" value="EF_G_EF_2_B"/>
    <property type="match status" value="1"/>
</dbReference>
<dbReference type="InterPro" id="IPR041095">
    <property type="entry name" value="EFG_II"/>
</dbReference>
<dbReference type="InterPro" id="IPR009022">
    <property type="entry name" value="EFG_III"/>
</dbReference>
<dbReference type="InterPro" id="IPR035647">
    <property type="entry name" value="EFG_III/V"/>
</dbReference>
<dbReference type="InterPro" id="IPR047872">
    <property type="entry name" value="EFG_IV"/>
</dbReference>
<dbReference type="InterPro" id="IPR035649">
    <property type="entry name" value="EFG_V"/>
</dbReference>
<dbReference type="InterPro" id="IPR000640">
    <property type="entry name" value="EFG_V-like"/>
</dbReference>
<dbReference type="InterPro" id="IPR004161">
    <property type="entry name" value="EFTu-like_2"/>
</dbReference>
<dbReference type="InterPro" id="IPR031157">
    <property type="entry name" value="G_TR_CS"/>
</dbReference>
<dbReference type="InterPro" id="IPR027417">
    <property type="entry name" value="P-loop_NTPase"/>
</dbReference>
<dbReference type="InterPro" id="IPR020568">
    <property type="entry name" value="Ribosomal_Su5_D2-typ_SF"/>
</dbReference>
<dbReference type="InterPro" id="IPR014721">
    <property type="entry name" value="Ribsml_uS5_D2-typ_fold_subgr"/>
</dbReference>
<dbReference type="InterPro" id="IPR005225">
    <property type="entry name" value="Small_GTP-bd"/>
</dbReference>
<dbReference type="InterPro" id="IPR000795">
    <property type="entry name" value="T_Tr_GTP-bd_dom"/>
</dbReference>
<dbReference type="InterPro" id="IPR009000">
    <property type="entry name" value="Transl_B-barrel_sf"/>
</dbReference>
<dbReference type="InterPro" id="IPR004540">
    <property type="entry name" value="Transl_elong_EFG/EF2"/>
</dbReference>
<dbReference type="InterPro" id="IPR005517">
    <property type="entry name" value="Transl_elong_EFG/EF2_IV"/>
</dbReference>
<dbReference type="NCBIfam" id="TIGR00484">
    <property type="entry name" value="EF-G"/>
    <property type="match status" value="1"/>
</dbReference>
<dbReference type="NCBIfam" id="NF009381">
    <property type="entry name" value="PRK12740.1-5"/>
    <property type="match status" value="1"/>
</dbReference>
<dbReference type="NCBIfam" id="TIGR00231">
    <property type="entry name" value="small_GTP"/>
    <property type="match status" value="1"/>
</dbReference>
<dbReference type="PANTHER" id="PTHR43636">
    <property type="entry name" value="ELONGATION FACTOR G, MITOCHONDRIAL"/>
    <property type="match status" value="1"/>
</dbReference>
<dbReference type="PANTHER" id="PTHR43636:SF2">
    <property type="entry name" value="ELONGATION FACTOR G, MITOCHONDRIAL"/>
    <property type="match status" value="1"/>
</dbReference>
<dbReference type="Pfam" id="PF00679">
    <property type="entry name" value="EFG_C"/>
    <property type="match status" value="1"/>
</dbReference>
<dbReference type="Pfam" id="PF14492">
    <property type="entry name" value="EFG_III"/>
    <property type="match status" value="1"/>
</dbReference>
<dbReference type="Pfam" id="PF03764">
    <property type="entry name" value="EFG_IV"/>
    <property type="match status" value="1"/>
</dbReference>
<dbReference type="Pfam" id="PF00009">
    <property type="entry name" value="GTP_EFTU"/>
    <property type="match status" value="1"/>
</dbReference>
<dbReference type="Pfam" id="PF03144">
    <property type="entry name" value="GTP_EFTU_D2"/>
    <property type="match status" value="1"/>
</dbReference>
<dbReference type="PRINTS" id="PR00315">
    <property type="entry name" value="ELONGATNFCT"/>
</dbReference>
<dbReference type="SMART" id="SM00838">
    <property type="entry name" value="EFG_C"/>
    <property type="match status" value="1"/>
</dbReference>
<dbReference type="SMART" id="SM00889">
    <property type="entry name" value="EFG_IV"/>
    <property type="match status" value="1"/>
</dbReference>
<dbReference type="SUPFAM" id="SSF54980">
    <property type="entry name" value="EF-G C-terminal domain-like"/>
    <property type="match status" value="2"/>
</dbReference>
<dbReference type="SUPFAM" id="SSF52540">
    <property type="entry name" value="P-loop containing nucleoside triphosphate hydrolases"/>
    <property type="match status" value="1"/>
</dbReference>
<dbReference type="SUPFAM" id="SSF54211">
    <property type="entry name" value="Ribosomal protein S5 domain 2-like"/>
    <property type="match status" value="1"/>
</dbReference>
<dbReference type="SUPFAM" id="SSF50447">
    <property type="entry name" value="Translation proteins"/>
    <property type="match status" value="1"/>
</dbReference>
<dbReference type="PROSITE" id="PS00301">
    <property type="entry name" value="G_TR_1"/>
    <property type="match status" value="1"/>
</dbReference>
<dbReference type="PROSITE" id="PS51722">
    <property type="entry name" value="G_TR_2"/>
    <property type="match status" value="1"/>
</dbReference>
<gene>
    <name type="ORF">CPIJ005834</name>
</gene>
<evidence type="ECO:0000255" key="1">
    <source>
        <dbReference type="HAMAP-Rule" id="MF_03061"/>
    </source>
</evidence>
<evidence type="ECO:0000305" key="2"/>
<reference key="1">
    <citation type="submission" date="2007-03" db="EMBL/GenBank/DDBJ databases">
        <title>Annotation of Culex pipiens quinquefasciatus.</title>
        <authorList>
            <consortium name="The Broad Institute Genome Sequencing Platform"/>
            <person name="Atkinson P.W."/>
            <person name="Hemingway J."/>
            <person name="Christensen B.M."/>
            <person name="Higgs S."/>
            <person name="Kodira C.D."/>
            <person name="Hannick L.I."/>
            <person name="Megy K."/>
            <person name="O'Leary S.B."/>
            <person name="Pearson M."/>
            <person name="Haas B.J."/>
            <person name="Mauceli E."/>
            <person name="Wortman J.R."/>
            <person name="Lee N.H."/>
            <person name="Guigo R."/>
            <person name="Stanke M."/>
            <person name="Alvarado L."/>
            <person name="Amedeo P."/>
            <person name="Antoine C.H."/>
            <person name="Arensburger P."/>
            <person name="Bidwell S.L."/>
            <person name="Crawford M."/>
            <person name="Camaro F."/>
            <person name="Devon K."/>
            <person name="Engels R."/>
            <person name="Hammond M."/>
            <person name="Howarth C."/>
            <person name="Koehrsen M."/>
            <person name="Lawson D."/>
            <person name="Montgomery P."/>
            <person name="Nene V."/>
            <person name="Nusbaum C."/>
            <person name="Puiu D."/>
            <person name="Romero-Severson J."/>
            <person name="Severson D.W."/>
            <person name="Shumway M."/>
            <person name="Sisk P."/>
            <person name="Stolte C."/>
            <person name="Zeng Q."/>
            <person name="Eisenstadt E."/>
            <person name="Fraser-Liggett C.M."/>
            <person name="Strausberg R."/>
            <person name="Galagan J."/>
            <person name="Birren B."/>
            <person name="Collins F.H."/>
        </authorList>
    </citation>
    <scope>NUCLEOTIDE SEQUENCE [LARGE SCALE GENOMIC DNA]</scope>
    <source>
        <strain>JHB</strain>
    </source>
</reference>
<keyword id="KW-0251">Elongation factor</keyword>
<keyword id="KW-0342">GTP-binding</keyword>
<keyword id="KW-0496">Mitochondrion</keyword>
<keyword id="KW-0547">Nucleotide-binding</keyword>
<keyword id="KW-0648">Protein biosynthesis</keyword>
<keyword id="KW-1185">Reference proteome</keyword>
<keyword id="KW-0809">Transit peptide</keyword>
<accession>B0WGM1</accession>